<sequence length="575" mass="64223">MTEIEFGQPLPSNLDYAVSFGIPTWDSAIGYAEKVPEVIGKMATGYPRYFPQPPVQRLCAYFVKKFGRGSENCRPFPSVNLGLKCFEYVKSVSGPESKAHLEVETVTIKNRGAKTSKEPAELVLTIAAVLASEEEFETVKEYWKLRGECVSSRLALSVNQLLDCANHGSEQVLRELEAGVFAAKKGEEKAKNLIKGRIVENRFRPFGLEKKTPNWEGLNLNPNEDVYLVSSGMSAISTARNLLTFWEEKKNSGDSLNKTTSDQKKKPLLCDTVGIFGFPFKDTQVIMTKFGKCKFFGFGNSRDVVELQKFLETSKQRILAVFVETPSNPLLNMPDLKKLRSLADQYGFFIVIDDTIGGLNVDILPYADIVSTSLTKLFNGASNVMGGSVVLNPKSSLYPYAREYFRSANFEDLLWCEDAIVLERNSRDFEDRTLRANANTGILLNDLLLPEEGKICKKIYYPTVTSKETFENYESVRNERGGYGCLFSVAFFNEGDAKAFYDSLKVFKGPSNGTNFTLACPYVHLAHHSELEEVSKFGADPNIIRVSVGLEDIQWLLKVFSSALDVVKSRGSKHS</sequence>
<reference key="1">
    <citation type="submission" date="1995-01" db="EMBL/GenBank/DDBJ databases">
        <title>Sequence of a 37 kb DNA fragment from chromosome XII of Saccharomyces cerevisiae including the subtelomeric region of the left arm.</title>
        <authorList>
            <person name="Wedler H."/>
            <person name="Wambutt R."/>
        </authorList>
    </citation>
    <scope>NUCLEOTIDE SEQUENCE [GENOMIC DNA]</scope>
    <source>
        <strain>ATCC 204511 / S288c / AB972</strain>
    </source>
</reference>
<reference key="2">
    <citation type="journal article" date="1997" name="Nature">
        <title>The nucleotide sequence of Saccharomyces cerevisiae chromosome XII.</title>
        <authorList>
            <person name="Johnston M."/>
            <person name="Hillier L.W."/>
            <person name="Riles L."/>
            <person name="Albermann K."/>
            <person name="Andre B."/>
            <person name="Ansorge W."/>
            <person name="Benes V."/>
            <person name="Brueckner M."/>
            <person name="Delius H."/>
            <person name="Dubois E."/>
            <person name="Duesterhoeft A."/>
            <person name="Entian K.-D."/>
            <person name="Floeth M."/>
            <person name="Goffeau A."/>
            <person name="Hebling U."/>
            <person name="Heumann K."/>
            <person name="Heuss-Neitzel D."/>
            <person name="Hilbert H."/>
            <person name="Hilger F."/>
            <person name="Kleine K."/>
            <person name="Koetter P."/>
            <person name="Louis E.J."/>
            <person name="Messenguy F."/>
            <person name="Mewes H.-W."/>
            <person name="Miosga T."/>
            <person name="Moestl D."/>
            <person name="Mueller-Auer S."/>
            <person name="Nentwich U."/>
            <person name="Obermaier B."/>
            <person name="Piravandi E."/>
            <person name="Pohl T.M."/>
            <person name="Portetelle D."/>
            <person name="Purnelle B."/>
            <person name="Rechmann S."/>
            <person name="Rieger M."/>
            <person name="Rinke M."/>
            <person name="Rose M."/>
            <person name="Scharfe M."/>
            <person name="Scherens B."/>
            <person name="Scholler P."/>
            <person name="Schwager C."/>
            <person name="Schwarz S."/>
            <person name="Underwood A.P."/>
            <person name="Urrestarazu L.A."/>
            <person name="Vandenbol M."/>
            <person name="Verhasselt P."/>
            <person name="Vierendeels F."/>
            <person name="Voet M."/>
            <person name="Volckaert G."/>
            <person name="Voss H."/>
            <person name="Wambutt R."/>
            <person name="Wedler E."/>
            <person name="Wedler H."/>
            <person name="Zimmermann F.K."/>
            <person name="Zollner A."/>
            <person name="Hani J."/>
            <person name="Hoheisel J.D."/>
        </authorList>
    </citation>
    <scope>NUCLEOTIDE SEQUENCE [LARGE SCALE GENOMIC DNA]</scope>
    <source>
        <strain>ATCC 204508 / S288c</strain>
    </source>
</reference>
<reference key="3">
    <citation type="journal article" date="2014" name="G3 (Bethesda)">
        <title>The reference genome sequence of Saccharomyces cerevisiae: Then and now.</title>
        <authorList>
            <person name="Engel S.R."/>
            <person name="Dietrich F.S."/>
            <person name="Fisk D.G."/>
            <person name="Binkley G."/>
            <person name="Balakrishnan R."/>
            <person name="Costanzo M.C."/>
            <person name="Dwight S.S."/>
            <person name="Hitz B.C."/>
            <person name="Karra K."/>
            <person name="Nash R.S."/>
            <person name="Weng S."/>
            <person name="Wong E.D."/>
            <person name="Lloyd P."/>
            <person name="Skrzypek M.S."/>
            <person name="Miyasato S.R."/>
            <person name="Simison M."/>
            <person name="Cherry J.M."/>
        </authorList>
    </citation>
    <scope>GENOME REANNOTATION</scope>
    <source>
        <strain>ATCC 204508 / S288c</strain>
    </source>
</reference>
<reference key="4">
    <citation type="journal article" date="2003" name="Nature">
        <title>Global analysis of protein expression in yeast.</title>
        <authorList>
            <person name="Ghaemmaghami S."/>
            <person name="Huh W.-K."/>
            <person name="Bower K."/>
            <person name="Howson R.W."/>
            <person name="Belle A."/>
            <person name="Dephoure N."/>
            <person name="O'Shea E.K."/>
            <person name="Weissman J.S."/>
        </authorList>
    </citation>
    <scope>LEVEL OF PROTEIN EXPRESSION [LARGE SCALE ANALYSIS]</scope>
</reference>
<reference key="5">
    <citation type="journal article" date="2022" name="J. Biol. Chem.">
        <title>On the illusion of auxotrophy: met15Delta yeast cells can grow on inorganic sulfur thanks to the previously uncharacterized homocysteine synthase Yll058w.</title>
        <authorList>
            <person name="Van Oss S.B."/>
            <person name="Parikh S.B."/>
            <person name="Coelho N.C."/>
            <person name="Wacholder A."/>
            <person name="Belashov I."/>
            <person name="Zdancewicz S."/>
            <person name="Michaca M."/>
            <person name="Xu J."/>
            <person name="Kang Y.P."/>
            <person name="Ward N.P."/>
            <person name="Yoon S.J."/>
            <person name="McCourt K.M."/>
            <person name="McKee J."/>
            <person name="Ideker T."/>
            <person name="VanDemark A.P."/>
            <person name="DeNicola G.M."/>
            <person name="Carvunis A.R."/>
        </authorList>
    </citation>
    <scope>FUNCTION</scope>
    <scope>CATALYTIC ACTIVITY</scope>
    <scope>BIOPHYSICOCHEMICAL PROPERTIES</scope>
    <scope>PATHWAY</scope>
    <scope>DISRUPTION PHENOTYPE</scope>
    <scope>MUTAGENESIS OF LYS-376</scope>
</reference>
<reference key="6">
    <citation type="journal article" date="2022" name="PLoS Biol.">
        <title>Inorganic sulfur fixation via a new homocysteine synthase allows yeast cells to cooperatively compensate for methionine auxotrophy.</title>
        <authorList>
            <person name="Yu J.S.L."/>
            <person name="Heineike B.M."/>
            <person name="Hartl J."/>
            <person name="Aulakh S.K."/>
            <person name="Correia-Melo C."/>
            <person name="Lehmann A."/>
            <person name="Lemke O."/>
            <person name="Agostini F."/>
            <person name="Lee C.T."/>
            <person name="Demichev V."/>
            <person name="Messner C.B."/>
            <person name="Muelleder M."/>
            <person name="Ralser M."/>
        </authorList>
    </citation>
    <scope>FUNCTION</scope>
    <scope>CATALYTIC ACTIVITY</scope>
    <scope>PATHWAY</scope>
    <scope>INDUCTION</scope>
    <scope>DISRUPTION PHENOTYPE</scope>
</reference>
<gene>
    <name evidence="6" type="primary">HSU1</name>
    <name evidence="10" type="ordered locus">YLL058W</name>
    <name evidence="10" type="ORF">L0569</name>
</gene>
<evidence type="ECO:0000250" key="1">
    <source>
        <dbReference type="UniProtKB" id="P06106"/>
    </source>
</evidence>
<evidence type="ECO:0000250" key="2">
    <source>
        <dbReference type="UniProtKB" id="P06721"/>
    </source>
</evidence>
<evidence type="ECO:0000269" key="3">
    <source>
    </source>
</evidence>
<evidence type="ECO:0000269" key="4">
    <source>
    </source>
</evidence>
<evidence type="ECO:0000269" key="5">
    <source>
    </source>
</evidence>
<evidence type="ECO:0000303" key="6">
    <source>
    </source>
</evidence>
<evidence type="ECO:0000305" key="7"/>
<evidence type="ECO:0000305" key="8">
    <source>
    </source>
</evidence>
<evidence type="ECO:0000305" key="9">
    <source>
    </source>
</evidence>
<evidence type="ECO:0000312" key="10">
    <source>
        <dbReference type="SGD" id="S000003981"/>
    </source>
</evidence>
<dbReference type="EC" id="2.5.1.47" evidence="5"/>
<dbReference type="EC" id="2.5.1.49" evidence="4 5"/>
<dbReference type="EMBL" id="Z47973">
    <property type="protein sequence ID" value="CAA87999.1"/>
    <property type="molecule type" value="Genomic_DNA"/>
</dbReference>
<dbReference type="EMBL" id="Z73163">
    <property type="protein sequence ID" value="CAA97511.1"/>
    <property type="molecule type" value="Genomic_DNA"/>
</dbReference>
<dbReference type="EMBL" id="BK006945">
    <property type="protein sequence ID" value="DAA09266.1"/>
    <property type="molecule type" value="Genomic_DNA"/>
</dbReference>
<dbReference type="PIR" id="S50962">
    <property type="entry name" value="S50962"/>
</dbReference>
<dbReference type="RefSeq" id="NP_013042.1">
    <property type="nucleotide sequence ID" value="NM_001181878.1"/>
</dbReference>
<dbReference type="SMR" id="Q12198"/>
<dbReference type="BioGRID" id="31257">
    <property type="interactions" value="52"/>
</dbReference>
<dbReference type="FunCoup" id="Q12198">
    <property type="interactions" value="192"/>
</dbReference>
<dbReference type="STRING" id="4932.YLL058W"/>
<dbReference type="PaxDb" id="4932-YLL058W"/>
<dbReference type="PeptideAtlas" id="Q12198"/>
<dbReference type="EnsemblFungi" id="YLL058W_mRNA">
    <property type="protein sequence ID" value="YLL058W"/>
    <property type="gene ID" value="YLL058W"/>
</dbReference>
<dbReference type="GeneID" id="850668"/>
<dbReference type="KEGG" id="sce:YLL058W"/>
<dbReference type="AGR" id="SGD:S000003981"/>
<dbReference type="SGD" id="S000003981">
    <property type="gene designation" value="HSU1"/>
</dbReference>
<dbReference type="VEuPathDB" id="FungiDB:YLL058W"/>
<dbReference type="eggNOG" id="KOG0053">
    <property type="taxonomic scope" value="Eukaryota"/>
</dbReference>
<dbReference type="GeneTree" id="ENSGT00940000176383"/>
<dbReference type="HOGENOM" id="CLU_011302_1_0_1"/>
<dbReference type="InParanoid" id="Q12198"/>
<dbReference type="OMA" id="LACPYVH"/>
<dbReference type="OrthoDB" id="10047078at2759"/>
<dbReference type="BioCyc" id="YEAST:G3O-32157-MONOMER"/>
<dbReference type="BioGRID-ORCS" id="850668">
    <property type="hits" value="3 hits in 10 CRISPR screens"/>
</dbReference>
<dbReference type="PRO" id="PR:Q12198"/>
<dbReference type="Proteomes" id="UP000002311">
    <property type="component" value="Chromosome XII"/>
</dbReference>
<dbReference type="RNAct" id="Q12198">
    <property type="molecule type" value="protein"/>
</dbReference>
<dbReference type="GO" id="GO:0005737">
    <property type="term" value="C:cytoplasm"/>
    <property type="evidence" value="ECO:0007669"/>
    <property type="project" value="UniProtKB-SubCell"/>
</dbReference>
<dbReference type="GO" id="GO:0003962">
    <property type="term" value="F:cystathionine gamma-synthase activity"/>
    <property type="evidence" value="ECO:0000318"/>
    <property type="project" value="GO_Central"/>
</dbReference>
<dbReference type="GO" id="GO:0004124">
    <property type="term" value="F:cysteine synthase activity"/>
    <property type="evidence" value="ECO:0007669"/>
    <property type="project" value="RHEA"/>
</dbReference>
<dbReference type="GO" id="GO:0003961">
    <property type="term" value="F:O-acetylhomoserine aminocarboxypropyltransferase activity"/>
    <property type="evidence" value="ECO:0000314"/>
    <property type="project" value="UniProtKB"/>
</dbReference>
<dbReference type="GO" id="GO:0051009">
    <property type="term" value="F:O-acetylhomoserine sulfhydrylase activity"/>
    <property type="evidence" value="ECO:0000314"/>
    <property type="project" value="SGD"/>
</dbReference>
<dbReference type="GO" id="GO:0030170">
    <property type="term" value="F:pyridoxal phosphate binding"/>
    <property type="evidence" value="ECO:0007669"/>
    <property type="project" value="InterPro"/>
</dbReference>
<dbReference type="GO" id="GO:0071269">
    <property type="term" value="P:L-homocysteine biosynthetic process"/>
    <property type="evidence" value="ECO:0000314"/>
    <property type="project" value="UniProtKB"/>
</dbReference>
<dbReference type="GO" id="GO:0000103">
    <property type="term" value="P:sulfate assimilation"/>
    <property type="evidence" value="ECO:0000315"/>
    <property type="project" value="UniProtKB"/>
</dbReference>
<dbReference type="GO" id="GO:0006790">
    <property type="term" value="P:sulfur compound metabolic process"/>
    <property type="evidence" value="ECO:0000315"/>
    <property type="project" value="SGD"/>
</dbReference>
<dbReference type="GO" id="GO:0006791">
    <property type="term" value="P:sulfur utilization"/>
    <property type="evidence" value="ECO:0000315"/>
    <property type="project" value="UniProtKB"/>
</dbReference>
<dbReference type="GO" id="GO:0019346">
    <property type="term" value="P:transsulfuration"/>
    <property type="evidence" value="ECO:0000318"/>
    <property type="project" value="GO_Central"/>
</dbReference>
<dbReference type="FunFam" id="3.90.1150.10:FF:000063">
    <property type="entry name" value="Probable cystathionine gamma-synthase"/>
    <property type="match status" value="1"/>
</dbReference>
<dbReference type="FunFam" id="3.40.640.10:FF:000175">
    <property type="entry name" value="YLL058W-like protein"/>
    <property type="match status" value="1"/>
</dbReference>
<dbReference type="Gene3D" id="3.90.1150.10">
    <property type="entry name" value="Aspartate Aminotransferase, domain 1"/>
    <property type="match status" value="1"/>
</dbReference>
<dbReference type="Gene3D" id="3.40.640.10">
    <property type="entry name" value="Type I PLP-dependent aspartate aminotransferase-like (Major domain)"/>
    <property type="match status" value="1"/>
</dbReference>
<dbReference type="InterPro" id="IPR000277">
    <property type="entry name" value="Cys/Met-Metab_PyrdxlP-dep_enz"/>
</dbReference>
<dbReference type="InterPro" id="IPR015424">
    <property type="entry name" value="PyrdxlP-dep_Trfase"/>
</dbReference>
<dbReference type="InterPro" id="IPR015421">
    <property type="entry name" value="PyrdxlP-dep_Trfase_major"/>
</dbReference>
<dbReference type="InterPro" id="IPR015422">
    <property type="entry name" value="PyrdxlP-dep_Trfase_small"/>
</dbReference>
<dbReference type="InterPro" id="IPR051750">
    <property type="entry name" value="Trans-sulfuration_enzymes"/>
</dbReference>
<dbReference type="PANTHER" id="PTHR42699">
    <property type="match status" value="1"/>
</dbReference>
<dbReference type="PANTHER" id="PTHR42699:SF1">
    <property type="entry name" value="CYSTATHIONINE GAMMA-SYNTHASE-RELATED"/>
    <property type="match status" value="1"/>
</dbReference>
<dbReference type="Pfam" id="PF01053">
    <property type="entry name" value="Cys_Met_Meta_PP"/>
    <property type="match status" value="1"/>
</dbReference>
<dbReference type="SUPFAM" id="SSF53383">
    <property type="entry name" value="PLP-dependent transferases"/>
    <property type="match status" value="1"/>
</dbReference>
<proteinExistence type="evidence at protein level"/>
<keyword id="KW-0028">Amino-acid biosynthesis</keyword>
<keyword id="KW-0963">Cytoplasm</keyword>
<keyword id="KW-0486">Methionine biosynthesis</keyword>
<keyword id="KW-0663">Pyridoxal phosphate</keyword>
<keyword id="KW-1185">Reference proteome</keyword>
<keyword id="KW-0808">Transferase</keyword>
<feature type="chain" id="PRO_0000114782" description="Homocysteine/cysteine synthase">
    <location>
        <begin position="1"/>
        <end position="575"/>
    </location>
</feature>
<feature type="modified residue" description="N6-(pyridoxal phosphate)lysine" evidence="2">
    <location>
        <position position="376"/>
    </location>
</feature>
<feature type="mutagenesis site" description="Abolishes catalytic activity." evidence="4">
    <original>K</original>
    <variation>A</variation>
    <location>
        <position position="376"/>
    </location>
</feature>
<organism>
    <name type="scientific">Saccharomyces cerevisiae (strain ATCC 204508 / S288c)</name>
    <name type="common">Baker's yeast</name>
    <dbReference type="NCBI Taxonomy" id="559292"/>
    <lineage>
        <taxon>Eukaryota</taxon>
        <taxon>Fungi</taxon>
        <taxon>Dikarya</taxon>
        <taxon>Ascomycota</taxon>
        <taxon>Saccharomycotina</taxon>
        <taxon>Saccharomycetes</taxon>
        <taxon>Saccharomycetales</taxon>
        <taxon>Saccharomycetaceae</taxon>
        <taxon>Saccharomyces</taxon>
    </lineage>
</organism>
<name>METW_YEAST</name>
<protein>
    <recommendedName>
        <fullName evidence="1">Homocysteine/cysteine synthase</fullName>
        <ecNumber evidence="5">2.5.1.47</ecNumber>
        <ecNumber evidence="4 5">2.5.1.49</ecNumber>
    </recommendedName>
    <alternativeName>
        <fullName evidence="6">Hydrogen sulfide utilizing 1</fullName>
    </alternativeName>
    <alternativeName>
        <fullName evidence="1">O-acetylserine/O-acetylhomoserine sulfhydrylase</fullName>
        <shortName evidence="1">OAS-OAH SHLase</shortName>
        <shortName evidence="1">OAS-OAH sulfhydrylase</shortName>
    </alternativeName>
</protein>
<comment type="function">
    <text evidence="1 4 5">Plays a role in inorganic sulfur assimilation during sulfur-limited conditions; catalyzes the conversion of O-acetyl-L-homoserine (OAH) into homocysteine in the methionine biosynthesis pathway (PubMed:36379252, PubMed:36455053). Also catalyzes the conversion of O-acetylserine (OAS) into cysteine, the last step in the cysteine biosynthesis pathway (PubMed:36455053). However, it seems that in S.cerevisiae cysteine biosynthesis occurs exclusively through the cystathionine pathway and not via direct incorporation of sulfur into OAS (By similarity). It therefore has no metabolic role in cysteine biosynthesis and may only have a regulatory role controlling OAS levels (By similarity).</text>
</comment>
<comment type="catalytic activity">
    <reaction evidence="1">
        <text>O-acetyl-L-homoserine + methanethiol = L-methionine + acetate + H(+)</text>
        <dbReference type="Rhea" id="RHEA:10048"/>
        <dbReference type="ChEBI" id="CHEBI:15378"/>
        <dbReference type="ChEBI" id="CHEBI:16007"/>
        <dbReference type="ChEBI" id="CHEBI:30089"/>
        <dbReference type="ChEBI" id="CHEBI:57716"/>
        <dbReference type="ChEBI" id="CHEBI:57844"/>
        <dbReference type="EC" id="2.5.1.49"/>
    </reaction>
</comment>
<comment type="catalytic activity">
    <reaction evidence="4 5">
        <text>O-acetyl-L-homoserine + hydrogen sulfide = L-homocysteine + acetate</text>
        <dbReference type="Rhea" id="RHEA:27822"/>
        <dbReference type="ChEBI" id="CHEBI:29919"/>
        <dbReference type="ChEBI" id="CHEBI:30089"/>
        <dbReference type="ChEBI" id="CHEBI:57716"/>
        <dbReference type="ChEBI" id="CHEBI:58199"/>
        <dbReference type="EC" id="2.5.1.49"/>
    </reaction>
</comment>
<comment type="catalytic activity">
    <reaction evidence="5">
        <text>O-acetyl-L-serine + hydrogen sulfide = L-cysteine + acetate</text>
        <dbReference type="Rhea" id="RHEA:14829"/>
        <dbReference type="ChEBI" id="CHEBI:29919"/>
        <dbReference type="ChEBI" id="CHEBI:30089"/>
        <dbReference type="ChEBI" id="CHEBI:35235"/>
        <dbReference type="ChEBI" id="CHEBI:58340"/>
        <dbReference type="EC" id="2.5.1.47"/>
    </reaction>
</comment>
<comment type="cofactor">
    <cofactor evidence="1">
        <name>pyridoxal 5'-phosphate</name>
        <dbReference type="ChEBI" id="CHEBI:597326"/>
    </cofactor>
</comment>
<comment type="biophysicochemical properties">
    <kinetics>
        <KM evidence="4">4.29 uM for O-acetyl-L-homoserine (OAH) (at 30 degrees Celsius in potassium phosphate buffer)</KM>
    </kinetics>
</comment>
<comment type="pathway">
    <text evidence="8 9">Amino-acid biosynthesis; L-methionine biosynthesis via de novo pathway; L-homocysteine from O-acetyl-L-homoserine.</text>
</comment>
<comment type="subcellular location">
    <subcellularLocation>
        <location evidence="1">Cytoplasm</location>
    </subcellularLocation>
</comment>
<comment type="induction">
    <text evidence="5">Induced in sulfur-limiting conditions (at protein level).</text>
</comment>
<comment type="disruption phenotype">
    <text evidence="4 5">Decreases growth during sulfur-limited conditions (PubMed:36455053). Simultaneous knockout of MET17 results in an inability to utilize hydrogen sulfide for methionine metabolism, and toxic accumulation of hydrogen sulfide (PubMed:36379252, PubMed:36455053).</text>
</comment>
<comment type="miscellaneous">
    <text evidence="3">Present with 2070 molecules/cell in log phase SD medium.</text>
</comment>
<comment type="similarity">
    <text evidence="7">Belongs to the trans-sulfuration enzymes family. MET7 subfamily.</text>
</comment>
<accession>Q12198</accession>
<accession>D6VXV0</accession>